<comment type="function">
    <text>Component of the polyhedra envelope.</text>
</comment>
<comment type="subcellular location">
    <subcellularLocation>
        <location evidence="1">Virion membrane</location>
    </subcellularLocation>
</comment>
<comment type="similarity">
    <text evidence="1">Belongs to the baculoviridae E66 family.</text>
</comment>
<keyword id="KW-0472">Membrane</keyword>
<keyword id="KW-1185">Reference proteome</keyword>
<keyword id="KW-0261">Viral envelope protein</keyword>
<keyword id="KW-0946">Virion</keyword>
<sequence>MGLITLILALIVVLFVCVFASNSSKPANNASFADNGAQRTAREFGPAARGGELLEFERWFKDTLATVFAQKAEKVANPTRAWNAETVFDNLSPWTSAADFGTVCHTLIGYCVRYNSPGDALHHSPDLANNLISGLRAICARLPDPPPHQQAPWGPVADWYHFTITMPEVFMTVTIVLDNTPHYDEAAALTRHWLALYLPTAVTSMGWHRTAGNAMRMGVPYAYGQLLRGYSAQQIAQEPGVQETLKTVAFPYVAAGNGLHPDSIYIDHLDVRAYGYLINSFFTFAYYTRLFGADVVNTEGLTRAIENVGSPEGVVVPGVMSRNGTLYSNVIGNFVDYPIAVHSADLSKVLTKLSDSYYGAVVGATTRLAYYEADPTNNTQAPLWTMTRRIWNRRARVINYNANTVMFESGIILQSLNGVLRVPSTTTSTQSFRPAVGKTALAKTRTAGAILVHARFAEMNNLQFKSCTLFYDHGMFQLYYNIGVEPNSLNNVNGRVVVLSRDTSVNTNDLSFEAQRLNNNNSSDGSAFNGVVCQRVPITNFNVPSLTVRSPSASVELVEQIISFQNMYTASAVACYKLNVEGHSDALRAYRINMDEVVYVTTGEGVKALFAYPWLMLKEDAAVVFMSANEDLVVPMSVINNAFSAIDEPGLQYAPVNCFLYGNGFRLNDSLANLQFQFEIIN</sequence>
<protein>
    <recommendedName>
        <fullName>Occlusion-derived virus envelope protein E66</fullName>
        <shortName>ODV-E66</shortName>
    </recommendedName>
</protein>
<name>OE66_NPVOP</name>
<proteinExistence type="inferred from homology"/>
<evidence type="ECO:0000305" key="1"/>
<organismHost>
    <name type="scientific">Orgyia pseudotsugata</name>
    <name type="common">Douglas-fir tussock moth</name>
    <dbReference type="NCBI Taxonomy" id="33414"/>
</organismHost>
<gene>
    <name type="ORF">ORF50</name>
</gene>
<dbReference type="EMBL" id="U75930">
    <property type="protein sequence ID" value="AAC59049.1"/>
    <property type="molecule type" value="Genomic_DNA"/>
</dbReference>
<dbReference type="RefSeq" id="NP_046206.1">
    <property type="nucleotide sequence ID" value="NC_001875.2"/>
</dbReference>
<dbReference type="SMR" id="O10305"/>
<dbReference type="KEGG" id="vg:912014"/>
<dbReference type="OrthoDB" id="1386at10239"/>
<dbReference type="Proteomes" id="UP000009248">
    <property type="component" value="Genome"/>
</dbReference>
<dbReference type="GO" id="GO:0016020">
    <property type="term" value="C:membrane"/>
    <property type="evidence" value="ECO:0007669"/>
    <property type="project" value="UniProtKB-KW"/>
</dbReference>
<dbReference type="GO" id="GO:0019031">
    <property type="term" value="C:viral envelope"/>
    <property type="evidence" value="ECO:0007669"/>
    <property type="project" value="UniProtKB-KW"/>
</dbReference>
<dbReference type="GO" id="GO:0055036">
    <property type="term" value="C:virion membrane"/>
    <property type="evidence" value="ECO:0007669"/>
    <property type="project" value="UniProtKB-SubCell"/>
</dbReference>
<dbReference type="Gene3D" id="2.60.40.4340">
    <property type="match status" value="1"/>
</dbReference>
<dbReference type="Gene3D" id="2.70.98.100">
    <property type="entry name" value="Baculovirus E66 occlusion-derived virus envelope protein, domain 2"/>
    <property type="match status" value="1"/>
</dbReference>
<dbReference type="Gene3D" id="1.50.10.100">
    <property type="entry name" value="Chondroitin AC/alginate lyase"/>
    <property type="match status" value="1"/>
</dbReference>
<dbReference type="InterPro" id="IPR043082">
    <property type="entry name" value="Baculo_ODV-E66_core"/>
</dbReference>
<dbReference type="InterPro" id="IPR008929">
    <property type="entry name" value="Chondroitin_lyas"/>
</dbReference>
<dbReference type="InterPro" id="IPR012970">
    <property type="entry name" value="Lyase_8_alpha_N"/>
</dbReference>
<dbReference type="InterPro" id="IPR006934">
    <property type="entry name" value="ODV-E66_C_baculovirus"/>
</dbReference>
<dbReference type="Pfam" id="PF04850">
    <property type="entry name" value="Baculo_E66"/>
    <property type="match status" value="1"/>
</dbReference>
<dbReference type="Pfam" id="PF08124">
    <property type="entry name" value="Lyase_8_N"/>
    <property type="match status" value="1"/>
</dbReference>
<dbReference type="SUPFAM" id="SSF48230">
    <property type="entry name" value="Chondroitin AC/alginate lyase"/>
    <property type="match status" value="1"/>
</dbReference>
<reference key="1">
    <citation type="journal article" date="1997" name="Virology">
        <title>The sequence of the Orgyia pseudotsugata multinucleocapsid nuclear polyhedrosis virus genome.</title>
        <authorList>
            <person name="Ahrens C.H."/>
            <person name="Russell R.R."/>
            <person name="Funk C.J."/>
            <person name="Evans J."/>
            <person name="Harwood S."/>
            <person name="Rohrmann G.F."/>
        </authorList>
    </citation>
    <scope>NUCLEOTIDE SEQUENCE [LARGE SCALE GENOMIC DNA]</scope>
</reference>
<accession>O10305</accession>
<organism>
    <name type="scientific">Orgyia pseudotsugata multicapsid polyhedrosis virus</name>
    <name type="common">OpMNPV</name>
    <dbReference type="NCBI Taxonomy" id="262177"/>
    <lineage>
        <taxon>Viruses</taxon>
        <taxon>Viruses incertae sedis</taxon>
        <taxon>Naldaviricetes</taxon>
        <taxon>Lefavirales</taxon>
        <taxon>Baculoviridae</taxon>
        <taxon>Alphabaculovirus</taxon>
        <taxon>Alphabaculovirus orpseudotsugatae</taxon>
    </lineage>
</organism>
<feature type="chain" id="PRO_0000132930" description="Occlusion-derived virus envelope protein E66">
    <location>
        <begin position="1"/>
        <end position="682"/>
    </location>
</feature>